<reference key="1">
    <citation type="journal article" date="1990" name="Nucleic Acids Res.">
        <title>Molecular analysis of RGP1, a new yeast gene required for proper mitotic growth.</title>
        <authorList>
            <person name="Aguilera A."/>
            <person name="Moskowitz P."/>
            <person name="Klein H.L."/>
        </authorList>
    </citation>
    <scope>NUCLEOTIDE SEQUENCE [GENOMIC DNA]</scope>
</reference>
<reference key="2">
    <citation type="journal article" date="1997" name="Nature">
        <title>The nucleotide sequence of Saccharomyces cerevisiae chromosome IV.</title>
        <authorList>
            <person name="Jacq C."/>
            <person name="Alt-Moerbe J."/>
            <person name="Andre B."/>
            <person name="Arnold W."/>
            <person name="Bahr A."/>
            <person name="Ballesta J.P.G."/>
            <person name="Bargues M."/>
            <person name="Baron L."/>
            <person name="Becker A."/>
            <person name="Biteau N."/>
            <person name="Bloecker H."/>
            <person name="Blugeon C."/>
            <person name="Boskovic J."/>
            <person name="Brandt P."/>
            <person name="Brueckner M."/>
            <person name="Buitrago M.J."/>
            <person name="Coster F."/>
            <person name="Delaveau T."/>
            <person name="del Rey F."/>
            <person name="Dujon B."/>
            <person name="Eide L.G."/>
            <person name="Garcia-Cantalejo J.M."/>
            <person name="Goffeau A."/>
            <person name="Gomez-Peris A."/>
            <person name="Granotier C."/>
            <person name="Hanemann V."/>
            <person name="Hankeln T."/>
            <person name="Hoheisel J.D."/>
            <person name="Jaeger W."/>
            <person name="Jimenez A."/>
            <person name="Jonniaux J.-L."/>
            <person name="Kraemer C."/>
            <person name="Kuester H."/>
            <person name="Laamanen P."/>
            <person name="Legros Y."/>
            <person name="Louis E.J."/>
            <person name="Moeller-Rieker S."/>
            <person name="Monnet A."/>
            <person name="Moro M."/>
            <person name="Mueller-Auer S."/>
            <person name="Nussbaumer B."/>
            <person name="Paricio N."/>
            <person name="Paulin L."/>
            <person name="Perea J."/>
            <person name="Perez-Alonso M."/>
            <person name="Perez-Ortin J.E."/>
            <person name="Pohl T.M."/>
            <person name="Prydz H."/>
            <person name="Purnelle B."/>
            <person name="Rasmussen S.W."/>
            <person name="Remacha M.A."/>
            <person name="Revuelta J.L."/>
            <person name="Rieger M."/>
            <person name="Salom D."/>
            <person name="Saluz H.P."/>
            <person name="Saiz J.E."/>
            <person name="Saren A.-M."/>
            <person name="Schaefer M."/>
            <person name="Scharfe M."/>
            <person name="Schmidt E.R."/>
            <person name="Schneider C."/>
            <person name="Scholler P."/>
            <person name="Schwarz S."/>
            <person name="Soler-Mira A."/>
            <person name="Urrestarazu L.A."/>
            <person name="Verhasselt P."/>
            <person name="Vissers S."/>
            <person name="Voet M."/>
            <person name="Volckaert G."/>
            <person name="Wagner G."/>
            <person name="Wambutt R."/>
            <person name="Wedler E."/>
            <person name="Wedler H."/>
            <person name="Woelfl S."/>
            <person name="Harris D.E."/>
            <person name="Bowman S."/>
            <person name="Brown D."/>
            <person name="Churcher C.M."/>
            <person name="Connor R."/>
            <person name="Dedman K."/>
            <person name="Gentles S."/>
            <person name="Hamlin N."/>
            <person name="Hunt S."/>
            <person name="Jones L."/>
            <person name="McDonald S."/>
            <person name="Murphy L.D."/>
            <person name="Niblett D."/>
            <person name="Odell C."/>
            <person name="Oliver K."/>
            <person name="Rajandream M.A."/>
            <person name="Richards C."/>
            <person name="Shore L."/>
            <person name="Walsh S.V."/>
            <person name="Barrell B.G."/>
            <person name="Dietrich F.S."/>
            <person name="Mulligan J.T."/>
            <person name="Allen E."/>
            <person name="Araujo R."/>
            <person name="Aviles E."/>
            <person name="Berno A."/>
            <person name="Carpenter J."/>
            <person name="Chen E."/>
            <person name="Cherry J.M."/>
            <person name="Chung E."/>
            <person name="Duncan M."/>
            <person name="Hunicke-Smith S."/>
            <person name="Hyman R.W."/>
            <person name="Komp C."/>
            <person name="Lashkari D."/>
            <person name="Lew H."/>
            <person name="Lin D."/>
            <person name="Mosedale D."/>
            <person name="Nakahara K."/>
            <person name="Namath A."/>
            <person name="Oefner P."/>
            <person name="Oh C."/>
            <person name="Petel F.X."/>
            <person name="Roberts D."/>
            <person name="Schramm S."/>
            <person name="Schroeder M."/>
            <person name="Shogren T."/>
            <person name="Shroff N."/>
            <person name="Winant A."/>
            <person name="Yelton M.A."/>
            <person name="Botstein D."/>
            <person name="Davis R.W."/>
            <person name="Johnston M."/>
            <person name="Andrews S."/>
            <person name="Brinkman R."/>
            <person name="Cooper J."/>
            <person name="Ding H."/>
            <person name="Du Z."/>
            <person name="Favello A."/>
            <person name="Fulton L."/>
            <person name="Gattung S."/>
            <person name="Greco T."/>
            <person name="Hallsworth K."/>
            <person name="Hawkins J."/>
            <person name="Hillier L.W."/>
            <person name="Jier M."/>
            <person name="Johnson D."/>
            <person name="Johnston L."/>
            <person name="Kirsten J."/>
            <person name="Kucaba T."/>
            <person name="Langston Y."/>
            <person name="Latreille P."/>
            <person name="Le T."/>
            <person name="Mardis E."/>
            <person name="Menezes S."/>
            <person name="Miller N."/>
            <person name="Nhan M."/>
            <person name="Pauley A."/>
            <person name="Peluso D."/>
            <person name="Rifkin L."/>
            <person name="Riles L."/>
            <person name="Taich A."/>
            <person name="Trevaskis E."/>
            <person name="Vignati D."/>
            <person name="Wilcox L."/>
            <person name="Wohldman P."/>
            <person name="Vaudin M."/>
            <person name="Wilson R."/>
            <person name="Waterston R."/>
            <person name="Albermann K."/>
            <person name="Hani J."/>
            <person name="Heumann K."/>
            <person name="Kleine K."/>
            <person name="Mewes H.-W."/>
            <person name="Zollner A."/>
            <person name="Zaccaria P."/>
        </authorList>
    </citation>
    <scope>NUCLEOTIDE SEQUENCE [LARGE SCALE GENOMIC DNA]</scope>
    <source>
        <strain>ATCC 204508 / S288c</strain>
    </source>
</reference>
<reference key="3">
    <citation type="journal article" date="2014" name="G3 (Bethesda)">
        <title>The reference genome sequence of Saccharomyces cerevisiae: Then and now.</title>
        <authorList>
            <person name="Engel S.R."/>
            <person name="Dietrich F.S."/>
            <person name="Fisk D.G."/>
            <person name="Binkley G."/>
            <person name="Balakrishnan R."/>
            <person name="Costanzo M.C."/>
            <person name="Dwight S.S."/>
            <person name="Hitz B.C."/>
            <person name="Karra K."/>
            <person name="Nash R.S."/>
            <person name="Weng S."/>
            <person name="Wong E.D."/>
            <person name="Lloyd P."/>
            <person name="Skrzypek M.S."/>
            <person name="Miyasato S.R."/>
            <person name="Simison M."/>
            <person name="Cherry J.M."/>
        </authorList>
    </citation>
    <scope>GENOME REANNOTATION</scope>
    <source>
        <strain>ATCC 204508 / S288c</strain>
    </source>
</reference>
<reference key="4">
    <citation type="journal article" date="2000" name="EMBO J.">
        <title>Ric1p and Rgp1p form a complex that catalyses nucleotide exchange on Ypt6p.</title>
        <authorList>
            <person name="Siniossoglou S."/>
            <person name="Peak-Chew S.Y."/>
            <person name="Pelham H.R.B."/>
        </authorList>
    </citation>
    <scope>FUNCTION</scope>
    <scope>SUBCELLULAR LOCATION</scope>
    <scope>INTERACTION WITH RGP1</scope>
</reference>
<reference key="5">
    <citation type="journal article" date="2001" name="EMBO J.">
        <title>An effector of Ypt6p binds the SNARE Tlg1p and mediates selective fusion of vesicles with late Golgi membranes.</title>
        <authorList>
            <person name="Siniossoglou S."/>
            <person name="Pelham H.R.B."/>
        </authorList>
    </citation>
    <scope>FUNCTION</scope>
    <scope>SUBCELLULAR LOCATION</scope>
</reference>
<reference key="6">
    <citation type="journal article" date="2003" name="Nature">
        <title>Global analysis of protein expression in yeast.</title>
        <authorList>
            <person name="Ghaemmaghami S."/>
            <person name="Huh W.-K."/>
            <person name="Bower K."/>
            <person name="Howson R.W."/>
            <person name="Belle A."/>
            <person name="Dephoure N."/>
            <person name="O'Shea E.K."/>
            <person name="Weissman J.S."/>
        </authorList>
    </citation>
    <scope>LEVEL OF PROTEIN EXPRESSION [LARGE SCALE ANALYSIS]</scope>
</reference>
<reference key="7">
    <citation type="journal article" date="2007" name="J. Proteome Res.">
        <title>Large-scale phosphorylation analysis of alpha-factor-arrested Saccharomyces cerevisiae.</title>
        <authorList>
            <person name="Li X."/>
            <person name="Gerber S.A."/>
            <person name="Rudner A.D."/>
            <person name="Beausoleil S.A."/>
            <person name="Haas W."/>
            <person name="Villen J."/>
            <person name="Elias J.E."/>
            <person name="Gygi S.P."/>
        </authorList>
    </citation>
    <scope>PHOSPHORYLATION [LARGE SCALE ANALYSIS] AT SER-363 AND SER-364</scope>
    <scope>IDENTIFICATION BY MASS SPECTROMETRY [LARGE SCALE ANALYSIS]</scope>
    <source>
        <strain>ADR376</strain>
    </source>
</reference>
<reference key="8">
    <citation type="journal article" date="2008" name="Mol. Cell. Proteomics">
        <title>A multidimensional chromatography technology for in-depth phosphoproteome analysis.</title>
        <authorList>
            <person name="Albuquerque C.P."/>
            <person name="Smolka M.B."/>
            <person name="Payne S.H."/>
            <person name="Bafna V."/>
            <person name="Eng J."/>
            <person name="Zhou H."/>
        </authorList>
    </citation>
    <scope>PHOSPHORYLATION [LARGE SCALE ANALYSIS] AT SER-354</scope>
    <scope>IDENTIFICATION BY MASS SPECTROMETRY [LARGE SCALE ANALYSIS]</scope>
</reference>
<reference key="9">
    <citation type="journal article" date="2009" name="Science">
        <title>Global analysis of Cdk1 substrate phosphorylation sites provides insights into evolution.</title>
        <authorList>
            <person name="Holt L.J."/>
            <person name="Tuch B.B."/>
            <person name="Villen J."/>
            <person name="Johnson A.D."/>
            <person name="Gygi S.P."/>
            <person name="Morgan D.O."/>
        </authorList>
    </citation>
    <scope>PHOSPHORYLATION [LARGE SCALE ANALYSIS] AT SER-351; SER-354; SER-357; SER-363; SER-364 AND SER-370</scope>
    <scope>IDENTIFICATION BY MASS SPECTROMETRY [LARGE SCALE ANALYSIS]</scope>
</reference>
<protein>
    <recommendedName>
        <fullName evidence="7">Guanine nucleotide exchange factor subunit RGP1</fullName>
    </recommendedName>
    <alternativeName>
        <fullName evidence="8">Reduced growth phenotype protein 1</fullName>
        <shortName evidence="5">Rgp1p</shortName>
    </alternativeName>
</protein>
<name>RGP1_YEAST</name>
<keyword id="KW-0002">3D-structure</keyword>
<keyword id="KW-0131">Cell cycle</keyword>
<keyword id="KW-0132">Cell division</keyword>
<keyword id="KW-0333">Golgi apparatus</keyword>
<keyword id="KW-0344">Guanine-nucleotide releasing factor</keyword>
<keyword id="KW-0498">Mitosis</keyword>
<keyword id="KW-0597">Phosphoprotein</keyword>
<keyword id="KW-1185">Reference proteome</keyword>
<gene>
    <name evidence="6 8" type="primary">RGP1</name>
    <name type="ordered locus">YDR137W</name>
    <name type="ORF">YD9302.13</name>
</gene>
<proteinExistence type="evidence at protein level"/>
<dbReference type="EMBL" id="X52081">
    <property type="protein sequence ID" value="CAA36300.1"/>
    <property type="molecule type" value="Genomic_DNA"/>
</dbReference>
<dbReference type="EMBL" id="Z48179">
    <property type="protein sequence ID" value="CAA88219.1"/>
    <property type="molecule type" value="Genomic_DNA"/>
</dbReference>
<dbReference type="EMBL" id="BK006938">
    <property type="protein sequence ID" value="DAA11980.1"/>
    <property type="molecule type" value="Genomic_DNA"/>
</dbReference>
<dbReference type="PIR" id="S51865">
    <property type="entry name" value="S51865"/>
</dbReference>
<dbReference type="RefSeq" id="NP_010421.1">
    <property type="nucleotide sequence ID" value="NM_001180444.1"/>
</dbReference>
<dbReference type="PDB" id="9AYR">
    <property type="method" value="EM"/>
    <property type="resolution" value="3.30 A"/>
    <property type="chains" value="B=1-663"/>
</dbReference>
<dbReference type="PDBsum" id="9AYR"/>
<dbReference type="EMDB" id="EMD-43997"/>
<dbReference type="SMR" id="P16664"/>
<dbReference type="BioGRID" id="32191">
    <property type="interactions" value="527"/>
</dbReference>
<dbReference type="ComplexPortal" id="CPX-3078">
    <property type="entry name" value="Ric1-Rgp1 guanyl-nucleotide exchange factor complex"/>
</dbReference>
<dbReference type="DIP" id="DIP-6486N"/>
<dbReference type="FunCoup" id="P16664">
    <property type="interactions" value="70"/>
</dbReference>
<dbReference type="IntAct" id="P16664">
    <property type="interactions" value="5"/>
</dbReference>
<dbReference type="MINT" id="P16664"/>
<dbReference type="STRING" id="4932.YDR137W"/>
<dbReference type="iPTMnet" id="P16664"/>
<dbReference type="PaxDb" id="4932-YDR137W"/>
<dbReference type="PeptideAtlas" id="P16664"/>
<dbReference type="EnsemblFungi" id="YDR137W_mRNA">
    <property type="protein sequence ID" value="YDR137W"/>
    <property type="gene ID" value="YDR137W"/>
</dbReference>
<dbReference type="GeneID" id="851714"/>
<dbReference type="KEGG" id="sce:YDR137W"/>
<dbReference type="AGR" id="SGD:S000002544"/>
<dbReference type="SGD" id="S000002544">
    <property type="gene designation" value="RGP1"/>
</dbReference>
<dbReference type="VEuPathDB" id="FungiDB:YDR137W"/>
<dbReference type="eggNOG" id="KOG4469">
    <property type="taxonomic scope" value="Eukaryota"/>
</dbReference>
<dbReference type="GeneTree" id="ENSGT00390000006136"/>
<dbReference type="HOGENOM" id="CLU_030995_0_0_1"/>
<dbReference type="InParanoid" id="P16664"/>
<dbReference type="OMA" id="QFYEDKK"/>
<dbReference type="OrthoDB" id="1918at2759"/>
<dbReference type="BioCyc" id="YEAST:G3O-29734-MONOMER"/>
<dbReference type="Reactome" id="R-SCE-6811440">
    <property type="pathway name" value="Retrograde transport at the Trans-Golgi-Network"/>
</dbReference>
<dbReference type="Reactome" id="R-SCE-8876198">
    <property type="pathway name" value="RAB GEFs exchange GTP for GDP on RABs"/>
</dbReference>
<dbReference type="BioGRID-ORCS" id="851714">
    <property type="hits" value="4 hits in 10 CRISPR screens"/>
</dbReference>
<dbReference type="PRO" id="PR:P16664"/>
<dbReference type="Proteomes" id="UP000002311">
    <property type="component" value="Chromosome IV"/>
</dbReference>
<dbReference type="RNAct" id="P16664">
    <property type="molecule type" value="protein"/>
</dbReference>
<dbReference type="GO" id="GO:0005829">
    <property type="term" value="C:cytosol"/>
    <property type="evidence" value="ECO:0007669"/>
    <property type="project" value="GOC"/>
</dbReference>
<dbReference type="GO" id="GO:0005794">
    <property type="term" value="C:Golgi apparatus"/>
    <property type="evidence" value="ECO:0000314"/>
    <property type="project" value="ComplexPortal"/>
</dbReference>
<dbReference type="GO" id="GO:0000139">
    <property type="term" value="C:Golgi membrane"/>
    <property type="evidence" value="ECO:0000353"/>
    <property type="project" value="SGD"/>
</dbReference>
<dbReference type="GO" id="GO:0032045">
    <property type="term" value="C:guanyl-nucleotide exchange factor complex"/>
    <property type="evidence" value="ECO:0000314"/>
    <property type="project" value="SGD"/>
</dbReference>
<dbReference type="GO" id="GO:0034066">
    <property type="term" value="C:Ric1-Rgp1 guanyl-nucleotide exchange factor complex"/>
    <property type="evidence" value="ECO:0000353"/>
    <property type="project" value="ComplexPortal"/>
</dbReference>
<dbReference type="GO" id="GO:0005085">
    <property type="term" value="F:guanyl-nucleotide exchange factor activity"/>
    <property type="evidence" value="ECO:0007669"/>
    <property type="project" value="UniProtKB-KW"/>
</dbReference>
<dbReference type="GO" id="GO:0051301">
    <property type="term" value="P:cell division"/>
    <property type="evidence" value="ECO:0007669"/>
    <property type="project" value="UniProtKB-KW"/>
</dbReference>
<dbReference type="GO" id="GO:0042147">
    <property type="term" value="P:retrograde transport, endosome to Golgi"/>
    <property type="evidence" value="ECO:0000315"/>
    <property type="project" value="SGD"/>
</dbReference>
<dbReference type="InterPro" id="IPR014848">
    <property type="entry name" value="Rgp1"/>
</dbReference>
<dbReference type="PANTHER" id="PTHR12507">
    <property type="entry name" value="REDUCED GROWTH PHENOTYPE 1 RGP1, YEAST -RELATED"/>
    <property type="match status" value="1"/>
</dbReference>
<dbReference type="Pfam" id="PF08737">
    <property type="entry name" value="Rgp1"/>
    <property type="match status" value="1"/>
</dbReference>
<sequence>MRAHRIDTFLIRENIKLEIIHESNSYFGGEHISIAFRFKHLGSQHELFNYKEKLLTVDKAVEEKLEQQAKVQDDGEGTMENQTWSLKSLLGAFKRTGEPEESVDVDNMKMLNESKMLREKIQKQMYFHQPVTLISGYVQISGVFQYDSEVISESKFKQDEVKMVGLDIVPGHTTNSVLALEDGEHFKGKRNLTNYLNSDYTNVTNGLLFSESGSRGRTGTYNERTLMISNDTSIKTLPLLLIPQTLLFSEISLEPGEVRTFYFKSTKLPKDICPSYSSSKVASINYTLEVGADVLSDDNIEKFSNRVPITIAPYISSNAEQYTSRLDKPAIILKTGNIKELKPRLFTRKVSTASAVSFGRRKSSIIDIDSPLEDNEFVKRVKKNFIELVESNQNVSRDIDELIDLQMGVQFGKDEDSSDPEPNDSHFSNEMVTSAESSLRSDAVTKRRKSYSVRDNISNLEQKMWNDCSLVKSDENSNLLPQLINLQNAYQINRNNETMAKVSLSAPFYKTTDDINLVIELDPITTPLLKVTSLTVSLESFEIINPKYKTEGKGIGSKPKGNSVYEKHFICFDECKSVSVKLLPPRSPTNQITGQFKTDVFQHKWMIGLKFVIIAKTESITLDQFYEDKKGILFHSKENLEGEEFTCYVPIPILCTSEDFMGW</sequence>
<feature type="chain" id="PRO_0000097319" description="Guanine nucleotide exchange factor subunit RGP1">
    <location>
        <begin position="1"/>
        <end position="663"/>
    </location>
</feature>
<feature type="region of interest" description="Disordered" evidence="1">
    <location>
        <begin position="412"/>
        <end position="443"/>
    </location>
</feature>
<feature type="compositionally biased region" description="Polar residues" evidence="1">
    <location>
        <begin position="426"/>
        <end position="440"/>
    </location>
</feature>
<feature type="modified residue" description="Phosphoserine" evidence="11">
    <location>
        <position position="351"/>
    </location>
</feature>
<feature type="modified residue" description="Phosphoserine" evidence="10 11">
    <location>
        <position position="354"/>
    </location>
</feature>
<feature type="modified residue" description="Phosphoserine" evidence="11">
    <location>
        <position position="357"/>
    </location>
</feature>
<feature type="modified residue" description="Phosphoserine" evidence="9 11">
    <location>
        <position position="363"/>
    </location>
</feature>
<feature type="modified residue" description="Phosphoserine" evidence="9 11">
    <location>
        <position position="364"/>
    </location>
</feature>
<feature type="modified residue" description="Phosphoserine" evidence="11">
    <location>
        <position position="370"/>
    </location>
</feature>
<feature type="sequence conflict" description="In Ref. 1; CAA36300." evidence="7" ref="1">
    <original>EKLLT</original>
    <variation>KAS</variation>
    <location>
        <begin position="52"/>
        <end position="56"/>
    </location>
</feature>
<feature type="strand" evidence="12">
    <location>
        <begin position="3"/>
        <end position="12"/>
    </location>
</feature>
<feature type="strand" evidence="12">
    <location>
        <begin position="15"/>
        <end position="26"/>
    </location>
</feature>
<feature type="strand" evidence="12">
    <location>
        <begin position="33"/>
        <end position="40"/>
    </location>
</feature>
<feature type="helix" evidence="12">
    <location>
        <begin position="45"/>
        <end position="48"/>
    </location>
</feature>
<feature type="helix" evidence="12">
    <location>
        <begin position="125"/>
        <end position="128"/>
    </location>
</feature>
<feature type="strand" evidence="12">
    <location>
        <begin position="131"/>
        <end position="147"/>
    </location>
</feature>
<feature type="turn" evidence="12">
    <location>
        <begin position="148"/>
        <end position="150"/>
    </location>
</feature>
<feature type="strand" evidence="12">
    <location>
        <begin position="233"/>
        <end position="241"/>
    </location>
</feature>
<feature type="strand" evidence="12">
    <location>
        <begin position="245"/>
        <end position="253"/>
    </location>
</feature>
<feature type="strand" evidence="12">
    <location>
        <begin position="258"/>
        <end position="264"/>
    </location>
</feature>
<feature type="strand" evidence="12">
    <location>
        <begin position="280"/>
        <end position="294"/>
    </location>
</feature>
<feature type="strand" evidence="12">
    <location>
        <begin position="296"/>
        <end position="299"/>
    </location>
</feature>
<feature type="strand" evidence="12">
    <location>
        <begin position="301"/>
        <end position="311"/>
    </location>
</feature>
<feature type="strand" evidence="12">
    <location>
        <begin position="319"/>
        <end position="322"/>
    </location>
</feature>
<feature type="strand" evidence="12">
    <location>
        <begin position="327"/>
        <end position="329"/>
    </location>
</feature>
<feature type="strand" evidence="12">
    <location>
        <begin position="337"/>
        <end position="339"/>
    </location>
</feature>
<feature type="helix" evidence="12">
    <location>
        <begin position="380"/>
        <end position="389"/>
    </location>
</feature>
<feature type="helix" evidence="12">
    <location>
        <begin position="399"/>
        <end position="408"/>
    </location>
</feature>
<feature type="helix" evidence="12">
    <location>
        <begin position="453"/>
        <end position="459"/>
    </location>
</feature>
<feature type="helix" evidence="12">
    <location>
        <begin position="460"/>
        <end position="462"/>
    </location>
</feature>
<feature type="strand" evidence="12">
    <location>
        <begin position="479"/>
        <end position="485"/>
    </location>
</feature>
<feature type="strand" evidence="12">
    <location>
        <begin position="488"/>
        <end position="494"/>
    </location>
</feature>
<feature type="strand" evidence="12">
    <location>
        <begin position="497"/>
        <end position="507"/>
    </location>
</feature>
<feature type="strand" evidence="12">
    <location>
        <begin position="515"/>
        <end position="520"/>
    </location>
</feature>
<feature type="turn" evidence="12">
    <location>
        <begin position="522"/>
        <end position="524"/>
    </location>
</feature>
<feature type="strand" evidence="12">
    <location>
        <begin position="529"/>
        <end position="544"/>
    </location>
</feature>
<feature type="helix" evidence="12">
    <location>
        <begin position="546"/>
        <end position="548"/>
    </location>
</feature>
<feature type="strand" evidence="12">
    <location>
        <begin position="562"/>
        <end position="570"/>
    </location>
</feature>
<feature type="strand" evidence="12">
    <location>
        <begin position="577"/>
        <end position="582"/>
    </location>
</feature>
<feature type="strand" evidence="12">
    <location>
        <begin position="596"/>
        <end position="615"/>
    </location>
</feature>
<feature type="strand" evidence="12">
    <location>
        <begin position="618"/>
        <end position="628"/>
    </location>
</feature>
<feature type="strand" evidence="12">
    <location>
        <begin position="631"/>
        <end position="636"/>
    </location>
</feature>
<feature type="strand" evidence="12">
    <location>
        <begin position="638"/>
        <end position="643"/>
    </location>
</feature>
<feature type="strand" evidence="12">
    <location>
        <begin position="646"/>
        <end position="650"/>
    </location>
</feature>
<evidence type="ECO:0000256" key="1">
    <source>
        <dbReference type="SAM" id="MobiDB-lite"/>
    </source>
</evidence>
<evidence type="ECO:0000269" key="2">
    <source>
    </source>
</evidence>
<evidence type="ECO:0000269" key="3">
    <source>
    </source>
</evidence>
<evidence type="ECO:0000269" key="4">
    <source>
    </source>
</evidence>
<evidence type="ECO:0000303" key="5">
    <source>
    </source>
</evidence>
<evidence type="ECO:0000303" key="6">
    <source>
    </source>
</evidence>
<evidence type="ECO:0000305" key="7"/>
<evidence type="ECO:0000312" key="8">
    <source>
        <dbReference type="SGD" id="S000002544"/>
    </source>
</evidence>
<evidence type="ECO:0007744" key="9">
    <source>
    </source>
</evidence>
<evidence type="ECO:0007744" key="10">
    <source>
    </source>
</evidence>
<evidence type="ECO:0007744" key="11">
    <source>
    </source>
</evidence>
<evidence type="ECO:0007829" key="12">
    <source>
        <dbReference type="PDB" id="9AYR"/>
    </source>
</evidence>
<comment type="function">
    <text evidence="2 3">The RIC1-RGP1 complex acts as a guanine nucleotide exchange factor (GEF), which activates YPT6 by exchanging bound GDP for free GTP. It is thereby required for efficient fusion of endosome-derived vesicles with the Golgi. The RIC1-RGP1 participates in the recycling of SNC1, presumably by mediating fusion of endosomal vesicles with the Golgi compartment.</text>
</comment>
<comment type="function">
    <text>Required for proper mitotic growth.</text>
</comment>
<comment type="subunit">
    <text evidence="2">Forms a complex with RIC1.</text>
</comment>
<comment type="interaction">
    <interactant intactId="EBI-15080">
        <id>P16664</id>
    </interactant>
    <interactant intactId="EBI-15183">
        <id>P40395</id>
        <label>RIC1</label>
    </interactant>
    <organismsDiffer>false</organismsDiffer>
    <experiments>5</experiments>
</comment>
<comment type="subcellular location">
    <subcellularLocation>
        <location evidence="2 3">Golgi apparatus</location>
    </subcellularLocation>
</comment>
<comment type="miscellaneous">
    <text evidence="4">Present with 589 molecules/cell in log phase SD medium.</text>
</comment>
<comment type="similarity">
    <text evidence="7">Belongs to the RGP1 family.</text>
</comment>
<organism>
    <name type="scientific">Saccharomyces cerevisiae (strain ATCC 204508 / S288c)</name>
    <name type="common">Baker's yeast</name>
    <dbReference type="NCBI Taxonomy" id="559292"/>
    <lineage>
        <taxon>Eukaryota</taxon>
        <taxon>Fungi</taxon>
        <taxon>Dikarya</taxon>
        <taxon>Ascomycota</taxon>
        <taxon>Saccharomycotina</taxon>
        <taxon>Saccharomycetes</taxon>
        <taxon>Saccharomycetales</taxon>
        <taxon>Saccharomycetaceae</taxon>
        <taxon>Saccharomyces</taxon>
    </lineage>
</organism>
<accession>P16664</accession>
<accession>D6VSC0</accession>
<accession>Q03915</accession>